<evidence type="ECO:0000255" key="1">
    <source>
        <dbReference type="HAMAP-Rule" id="MF_00150"/>
    </source>
</evidence>
<name>ARGC_MARN8</name>
<dbReference type="EC" id="1.2.1.38" evidence="1"/>
<dbReference type="EMBL" id="CP000514">
    <property type="protein sequence ID" value="ABM17789.1"/>
    <property type="molecule type" value="Genomic_DNA"/>
</dbReference>
<dbReference type="RefSeq" id="WP_011784221.1">
    <property type="nucleotide sequence ID" value="NC_008740.1"/>
</dbReference>
<dbReference type="SMR" id="A1TYH0"/>
<dbReference type="STRING" id="351348.Maqu_0691"/>
<dbReference type="KEGG" id="maq:Maqu_0691"/>
<dbReference type="eggNOG" id="COG0002">
    <property type="taxonomic scope" value="Bacteria"/>
</dbReference>
<dbReference type="HOGENOM" id="CLU_006384_0_1_6"/>
<dbReference type="OrthoDB" id="9801289at2"/>
<dbReference type="UniPathway" id="UPA00068">
    <property type="reaction ID" value="UER00108"/>
</dbReference>
<dbReference type="Proteomes" id="UP000000998">
    <property type="component" value="Chromosome"/>
</dbReference>
<dbReference type="GO" id="GO:0005737">
    <property type="term" value="C:cytoplasm"/>
    <property type="evidence" value="ECO:0007669"/>
    <property type="project" value="UniProtKB-SubCell"/>
</dbReference>
<dbReference type="GO" id="GO:0003942">
    <property type="term" value="F:N-acetyl-gamma-glutamyl-phosphate reductase activity"/>
    <property type="evidence" value="ECO:0007669"/>
    <property type="project" value="UniProtKB-UniRule"/>
</dbReference>
<dbReference type="GO" id="GO:0051287">
    <property type="term" value="F:NAD binding"/>
    <property type="evidence" value="ECO:0007669"/>
    <property type="project" value="InterPro"/>
</dbReference>
<dbReference type="GO" id="GO:0070401">
    <property type="term" value="F:NADP+ binding"/>
    <property type="evidence" value="ECO:0007669"/>
    <property type="project" value="InterPro"/>
</dbReference>
<dbReference type="GO" id="GO:0006526">
    <property type="term" value="P:L-arginine biosynthetic process"/>
    <property type="evidence" value="ECO:0007669"/>
    <property type="project" value="UniProtKB-UniRule"/>
</dbReference>
<dbReference type="CDD" id="cd23934">
    <property type="entry name" value="AGPR_1_C"/>
    <property type="match status" value="1"/>
</dbReference>
<dbReference type="CDD" id="cd17895">
    <property type="entry name" value="AGPR_1_N"/>
    <property type="match status" value="1"/>
</dbReference>
<dbReference type="FunFam" id="3.30.360.10:FF:000014">
    <property type="entry name" value="N-acetyl-gamma-glutamyl-phosphate reductase"/>
    <property type="match status" value="1"/>
</dbReference>
<dbReference type="Gene3D" id="3.30.360.10">
    <property type="entry name" value="Dihydrodipicolinate Reductase, domain 2"/>
    <property type="match status" value="1"/>
</dbReference>
<dbReference type="Gene3D" id="3.40.50.720">
    <property type="entry name" value="NAD(P)-binding Rossmann-like Domain"/>
    <property type="match status" value="1"/>
</dbReference>
<dbReference type="HAMAP" id="MF_00150">
    <property type="entry name" value="ArgC_type1"/>
    <property type="match status" value="1"/>
</dbReference>
<dbReference type="InterPro" id="IPR023013">
    <property type="entry name" value="AGPR_AS"/>
</dbReference>
<dbReference type="InterPro" id="IPR000706">
    <property type="entry name" value="AGPR_type-1"/>
</dbReference>
<dbReference type="InterPro" id="IPR036291">
    <property type="entry name" value="NAD(P)-bd_dom_sf"/>
</dbReference>
<dbReference type="InterPro" id="IPR050085">
    <property type="entry name" value="NAGSA_dehydrogenase"/>
</dbReference>
<dbReference type="InterPro" id="IPR000534">
    <property type="entry name" value="Semialdehyde_DH_NAD-bd"/>
</dbReference>
<dbReference type="NCBIfam" id="TIGR01850">
    <property type="entry name" value="argC"/>
    <property type="match status" value="1"/>
</dbReference>
<dbReference type="PANTHER" id="PTHR32338:SF10">
    <property type="entry name" value="N-ACETYL-GAMMA-GLUTAMYL-PHOSPHATE REDUCTASE, CHLOROPLASTIC-RELATED"/>
    <property type="match status" value="1"/>
</dbReference>
<dbReference type="PANTHER" id="PTHR32338">
    <property type="entry name" value="N-ACETYL-GAMMA-GLUTAMYL-PHOSPHATE REDUCTASE, CHLOROPLASTIC-RELATED-RELATED"/>
    <property type="match status" value="1"/>
</dbReference>
<dbReference type="Pfam" id="PF01118">
    <property type="entry name" value="Semialdhyde_dh"/>
    <property type="match status" value="1"/>
</dbReference>
<dbReference type="Pfam" id="PF22698">
    <property type="entry name" value="Semialdhyde_dhC_1"/>
    <property type="match status" value="1"/>
</dbReference>
<dbReference type="SMART" id="SM00859">
    <property type="entry name" value="Semialdhyde_dh"/>
    <property type="match status" value="1"/>
</dbReference>
<dbReference type="SUPFAM" id="SSF55347">
    <property type="entry name" value="Glyceraldehyde-3-phosphate dehydrogenase-like, C-terminal domain"/>
    <property type="match status" value="1"/>
</dbReference>
<dbReference type="SUPFAM" id="SSF51735">
    <property type="entry name" value="NAD(P)-binding Rossmann-fold domains"/>
    <property type="match status" value="1"/>
</dbReference>
<dbReference type="PROSITE" id="PS01224">
    <property type="entry name" value="ARGC"/>
    <property type="match status" value="1"/>
</dbReference>
<comment type="function">
    <text evidence="1">Catalyzes the NADPH-dependent reduction of N-acetyl-5-glutamyl phosphate to yield N-acetyl-L-glutamate 5-semialdehyde.</text>
</comment>
<comment type="catalytic activity">
    <reaction evidence="1">
        <text>N-acetyl-L-glutamate 5-semialdehyde + phosphate + NADP(+) = N-acetyl-L-glutamyl 5-phosphate + NADPH + H(+)</text>
        <dbReference type="Rhea" id="RHEA:21588"/>
        <dbReference type="ChEBI" id="CHEBI:15378"/>
        <dbReference type="ChEBI" id="CHEBI:29123"/>
        <dbReference type="ChEBI" id="CHEBI:43474"/>
        <dbReference type="ChEBI" id="CHEBI:57783"/>
        <dbReference type="ChEBI" id="CHEBI:57936"/>
        <dbReference type="ChEBI" id="CHEBI:58349"/>
        <dbReference type="EC" id="1.2.1.38"/>
    </reaction>
</comment>
<comment type="pathway">
    <text evidence="1">Amino-acid biosynthesis; L-arginine biosynthesis; N(2)-acetyl-L-ornithine from L-glutamate: step 3/4.</text>
</comment>
<comment type="subcellular location">
    <subcellularLocation>
        <location evidence="1">Cytoplasm</location>
    </subcellularLocation>
</comment>
<comment type="similarity">
    <text evidence="1">Belongs to the NAGSA dehydrogenase family. Type 1 subfamily.</text>
</comment>
<accession>A1TYH0</accession>
<reference key="1">
    <citation type="journal article" date="2011" name="Appl. Environ. Microbiol.">
        <title>Genomic potential of Marinobacter aquaeolei, a biogeochemical 'opportunitroph'.</title>
        <authorList>
            <person name="Singer E."/>
            <person name="Webb E.A."/>
            <person name="Nelson W.C."/>
            <person name="Heidelberg J.F."/>
            <person name="Ivanova N."/>
            <person name="Pati A."/>
            <person name="Edwards K.J."/>
        </authorList>
    </citation>
    <scope>NUCLEOTIDE SEQUENCE [LARGE SCALE GENOMIC DNA]</scope>
    <source>
        <strain>ATCC 700491 / DSM 11845 / VT8</strain>
    </source>
</reference>
<keyword id="KW-0028">Amino-acid biosynthesis</keyword>
<keyword id="KW-0055">Arginine biosynthesis</keyword>
<keyword id="KW-0963">Cytoplasm</keyword>
<keyword id="KW-0521">NADP</keyword>
<keyword id="KW-0560">Oxidoreductase</keyword>
<gene>
    <name evidence="1" type="primary">argC</name>
    <name type="ordered locus">Maqu_0691</name>
</gene>
<proteinExistence type="inferred from homology"/>
<sequence>MIKVGIVGGTGYTGVELLRILATHPEAEVICITSRSEAGMPVADMYPNLRGHYELEFSEPDASVLASCDLVFFATPHGVAMRMVPELMASGVRVVDLSADFRLKDLDTWANWYGMPHESADWAEKAVYGLPEVARDAIRDAQLVANPGCYPTAVQLGFLPLLEQGLVNPARLIADAKSGASGAGRQGKIGMLHGEIGESFKAYGASGHRHLPEIRQGLTAAAGKGVGVTFVPHLIPMIRGIEATLYAELDNPQDFDRLQALYEARYKDEPFVDVMPFGSHPETRSVRGANHCRMALHRQEDSNIVIVSSVIDNLVKGAAGQAVQNMNIMFSLDETMGLNAPALLP</sequence>
<protein>
    <recommendedName>
        <fullName evidence="1">N-acetyl-gamma-glutamyl-phosphate reductase</fullName>
        <shortName evidence="1">AGPR</shortName>
        <ecNumber evidence="1">1.2.1.38</ecNumber>
    </recommendedName>
    <alternativeName>
        <fullName evidence="1">N-acetyl-glutamate semialdehyde dehydrogenase</fullName>
        <shortName evidence="1">NAGSA dehydrogenase</shortName>
    </alternativeName>
</protein>
<feature type="chain" id="PRO_1000011007" description="N-acetyl-gamma-glutamyl-phosphate reductase">
    <location>
        <begin position="1"/>
        <end position="345"/>
    </location>
</feature>
<feature type="active site" evidence="1">
    <location>
        <position position="149"/>
    </location>
</feature>
<organism>
    <name type="scientific">Marinobacter nauticus (strain ATCC 700491 / DSM 11845 / VT8)</name>
    <name type="common">Marinobacter aquaeolei</name>
    <dbReference type="NCBI Taxonomy" id="351348"/>
    <lineage>
        <taxon>Bacteria</taxon>
        <taxon>Pseudomonadati</taxon>
        <taxon>Pseudomonadota</taxon>
        <taxon>Gammaproteobacteria</taxon>
        <taxon>Pseudomonadales</taxon>
        <taxon>Marinobacteraceae</taxon>
        <taxon>Marinobacter</taxon>
    </lineage>
</organism>